<protein>
    <recommendedName>
        <fullName>Non-structural protein NS3</fullName>
    </recommendedName>
    <component>
        <recommendedName>
            <fullName>Non-structural protein NS3A</fullName>
        </recommendedName>
    </component>
</protein>
<name>VNS3_AHSV</name>
<dbReference type="EMBL" id="D12479">
    <property type="protein sequence ID" value="BAA02047.1"/>
    <property type="molecule type" value="Genomic_RNA"/>
</dbReference>
<dbReference type="PIR" id="JQ1949">
    <property type="entry name" value="JQ1949"/>
</dbReference>
<dbReference type="SMR" id="P33884"/>
<dbReference type="KEGG" id="vg:2886232"/>
<dbReference type="Proteomes" id="UP000201896">
    <property type="component" value="Genome"/>
</dbReference>
<dbReference type="InterPro" id="IPR002565">
    <property type="entry name" value="Orbi_NS3"/>
</dbReference>
<dbReference type="Pfam" id="PF01616">
    <property type="entry name" value="Orbi_NS3"/>
    <property type="match status" value="1"/>
</dbReference>
<comment type="function">
    <text>May play a role in the release of virions from infected cells.</text>
</comment>
<comment type="similarity">
    <text evidence="1">Belongs to the orbivirus NS3 family.</text>
</comment>
<accession>P33884</accession>
<organism>
    <name type="scientific">African horse sickness virus</name>
    <name type="common">AHSV</name>
    <name type="synonym">Orbivirus alphaequi</name>
    <dbReference type="NCBI Taxonomy" id="40050"/>
    <lineage>
        <taxon>Viruses</taxon>
        <taxon>Riboviria</taxon>
        <taxon>Orthornavirae</taxon>
        <taxon>Duplornaviricota</taxon>
        <taxon>Resentoviricetes</taxon>
        <taxon>Reovirales</taxon>
        <taxon>Sedoreoviridae</taxon>
        <taxon>Orbivirus</taxon>
    </lineage>
</organism>
<reference key="1">
    <citation type="journal article" date="1991" name="J. Gen. Virol.">
        <title>A comparison of the genes which encode non-structural protein NS3 of different orbiviruses.</title>
        <authorList>
            <person name="van Staden V."/>
            <person name="Huismans H."/>
        </authorList>
    </citation>
    <scope>NUCLEOTIDE SEQUENCE [GENOMIC RNA]</scope>
    <source>
        <strain>Serotype 3</strain>
    </source>
</reference>
<sequence length="217" mass="23635">MSLATIAENYMMHNGNQRAIVPYVPPPYAYANAPTLGGQAGEMESMSLGILNQAMSSTTGASRALKDEKAAFGAMAEALRDPEPIRQIKKHVGLRTLKHLKIELASMRRRYAILRVVIFMSGCVTMATSMAGGLTIIDNEIYEDLSGDGWLSKTIHGLNLLCTTMLLAAGKISDKIQEEISRTKRDIAKRESYVSAASMSWSGDTSVLLKEVKYGDS</sequence>
<feature type="chain" id="PRO_0000040640" description="Non-structural protein NS3">
    <location>
        <begin position="1"/>
        <end position="217"/>
    </location>
</feature>
<feature type="chain" id="PRO_0000040641" description="Non-structural protein NS3A">
    <location>
        <begin position="12"/>
        <end position="217"/>
    </location>
</feature>
<evidence type="ECO:0000305" key="1"/>
<gene>
    <name type="primary">Segment-10</name>
</gene>
<proteinExistence type="inferred from homology"/>